<keyword id="KW-0067">ATP-binding</keyword>
<keyword id="KW-0436">Ligase</keyword>
<keyword id="KW-0479">Metal-binding</keyword>
<keyword id="KW-0547">Nucleotide-binding</keyword>
<keyword id="KW-1185">Reference proteome</keyword>
<keyword id="KW-0862">Zinc</keyword>
<proteinExistence type="inferred from homology"/>
<evidence type="ECO:0000255" key="1">
    <source>
        <dbReference type="HAMAP-Rule" id="MF_01633"/>
    </source>
</evidence>
<dbReference type="EC" id="6.3.4.20" evidence="1"/>
<dbReference type="EMBL" id="CP000254">
    <property type="protein sequence ID" value="ABD42525.1"/>
    <property type="molecule type" value="Genomic_DNA"/>
</dbReference>
<dbReference type="RefSeq" id="WP_011449779.1">
    <property type="nucleotide sequence ID" value="NC_007796.1"/>
</dbReference>
<dbReference type="SMR" id="Q2FS65"/>
<dbReference type="STRING" id="323259.Mhun_2833"/>
<dbReference type="EnsemblBacteria" id="ABD42525">
    <property type="protein sequence ID" value="ABD42525"/>
    <property type="gene ID" value="Mhun_2833"/>
</dbReference>
<dbReference type="GeneID" id="3923102"/>
<dbReference type="KEGG" id="mhu:Mhun_2833"/>
<dbReference type="eggNOG" id="arCOG00039">
    <property type="taxonomic scope" value="Archaea"/>
</dbReference>
<dbReference type="HOGENOM" id="CLU_081854_1_1_2"/>
<dbReference type="InParanoid" id="Q2FS65"/>
<dbReference type="OrthoDB" id="6532at2157"/>
<dbReference type="UniPathway" id="UPA00391"/>
<dbReference type="Proteomes" id="UP000001941">
    <property type="component" value="Chromosome"/>
</dbReference>
<dbReference type="GO" id="GO:0005524">
    <property type="term" value="F:ATP binding"/>
    <property type="evidence" value="ECO:0007669"/>
    <property type="project" value="UniProtKB-UniRule"/>
</dbReference>
<dbReference type="GO" id="GO:0016879">
    <property type="term" value="F:ligase activity, forming carbon-nitrogen bonds"/>
    <property type="evidence" value="ECO:0007669"/>
    <property type="project" value="UniProtKB-UniRule"/>
</dbReference>
<dbReference type="GO" id="GO:0008270">
    <property type="term" value="F:zinc ion binding"/>
    <property type="evidence" value="ECO:0007669"/>
    <property type="project" value="UniProtKB-UniRule"/>
</dbReference>
<dbReference type="CDD" id="cd01995">
    <property type="entry name" value="QueC-like"/>
    <property type="match status" value="1"/>
</dbReference>
<dbReference type="Gene3D" id="3.40.50.620">
    <property type="entry name" value="HUPs"/>
    <property type="match status" value="1"/>
</dbReference>
<dbReference type="HAMAP" id="MF_01633">
    <property type="entry name" value="QueC"/>
    <property type="match status" value="1"/>
</dbReference>
<dbReference type="InterPro" id="IPR018317">
    <property type="entry name" value="QueC"/>
</dbReference>
<dbReference type="InterPro" id="IPR014729">
    <property type="entry name" value="Rossmann-like_a/b/a_fold"/>
</dbReference>
<dbReference type="NCBIfam" id="TIGR00364">
    <property type="entry name" value="7-cyano-7-deazaguanine synthase QueC"/>
    <property type="match status" value="1"/>
</dbReference>
<dbReference type="PANTHER" id="PTHR42914">
    <property type="entry name" value="7-CYANO-7-DEAZAGUANINE SYNTHASE"/>
    <property type="match status" value="1"/>
</dbReference>
<dbReference type="PANTHER" id="PTHR42914:SF1">
    <property type="entry name" value="7-CYANO-7-DEAZAGUANINE SYNTHASE"/>
    <property type="match status" value="1"/>
</dbReference>
<dbReference type="Pfam" id="PF06508">
    <property type="entry name" value="QueC"/>
    <property type="match status" value="1"/>
</dbReference>
<dbReference type="PIRSF" id="PIRSF006293">
    <property type="entry name" value="ExsB"/>
    <property type="match status" value="1"/>
</dbReference>
<dbReference type="SUPFAM" id="SSF52402">
    <property type="entry name" value="Adenine nucleotide alpha hydrolases-like"/>
    <property type="match status" value="1"/>
</dbReference>
<name>QUEC_METHJ</name>
<gene>
    <name evidence="1" type="primary">queC</name>
    <name type="ordered locus">Mhun_2833</name>
</gene>
<sequence length="220" mass="24277">MKAVCLLSGGMDSSTLACLAKHDGYDILALHFSYGQRTEEKERECAKRIARHLNALEFLEVDLTYLKAVGASSLTDYAMQVKAHEDAGDGIPDTYVPFRNANLLSVATSFAEARGADAIYIGVQASDYSGYPDCRPEFIDAFQKVITLGTRPDAGIILKTPFVKLNKAEILKIGMDLNVPYEDTWSCYAENEVACGICGSCHYRLEAFRQIGIQDPIPYR</sequence>
<protein>
    <recommendedName>
        <fullName evidence="1">7-cyano-7-deazaguanine synthase</fullName>
        <ecNumber evidence="1">6.3.4.20</ecNumber>
    </recommendedName>
    <alternativeName>
        <fullName evidence="1">7-cyano-7-carbaguanine synthase</fullName>
    </alternativeName>
    <alternativeName>
        <fullName evidence="1">Archaeosine biosynthesis protein QueC</fullName>
    </alternativeName>
    <alternativeName>
        <fullName evidence="1">PreQ(0) synthase</fullName>
    </alternativeName>
</protein>
<organism>
    <name type="scientific">Methanospirillum hungatei JF-1 (strain ATCC 27890 / DSM 864 / NBRC 100397 / JF-1)</name>
    <dbReference type="NCBI Taxonomy" id="323259"/>
    <lineage>
        <taxon>Archaea</taxon>
        <taxon>Methanobacteriati</taxon>
        <taxon>Methanobacteriota</taxon>
        <taxon>Stenosarchaea group</taxon>
        <taxon>Methanomicrobia</taxon>
        <taxon>Methanomicrobiales</taxon>
        <taxon>Methanospirillaceae</taxon>
        <taxon>Methanospirillum</taxon>
    </lineage>
</organism>
<comment type="function">
    <text evidence="1">Catalyzes the ATP-dependent conversion of 7-carboxy-7-deazaguanine (CDG) to 7-cyano-7-deazaguanine (preQ(0)).</text>
</comment>
<comment type="catalytic activity">
    <reaction evidence="1">
        <text>7-carboxy-7-deazaguanine + NH4(+) + ATP = 7-cyano-7-deazaguanine + ADP + phosphate + H2O + H(+)</text>
        <dbReference type="Rhea" id="RHEA:27982"/>
        <dbReference type="ChEBI" id="CHEBI:15377"/>
        <dbReference type="ChEBI" id="CHEBI:15378"/>
        <dbReference type="ChEBI" id="CHEBI:28938"/>
        <dbReference type="ChEBI" id="CHEBI:30616"/>
        <dbReference type="ChEBI" id="CHEBI:43474"/>
        <dbReference type="ChEBI" id="CHEBI:45075"/>
        <dbReference type="ChEBI" id="CHEBI:61036"/>
        <dbReference type="ChEBI" id="CHEBI:456216"/>
        <dbReference type="EC" id="6.3.4.20"/>
    </reaction>
</comment>
<comment type="cofactor">
    <cofactor evidence="1">
        <name>Zn(2+)</name>
        <dbReference type="ChEBI" id="CHEBI:29105"/>
    </cofactor>
    <text evidence="1">Binds 1 zinc ion per subunit.</text>
</comment>
<comment type="pathway">
    <text evidence="1">Purine metabolism; 7-cyano-7-deazaguanine biosynthesis.</text>
</comment>
<comment type="similarity">
    <text evidence="1">Belongs to the QueC family.</text>
</comment>
<accession>Q2FS65</accession>
<reference key="1">
    <citation type="journal article" date="2016" name="Stand. Genomic Sci.">
        <title>Complete genome sequence of Methanospirillum hungatei type strain JF1.</title>
        <authorList>
            <person name="Gunsalus R.P."/>
            <person name="Cook L.E."/>
            <person name="Crable B."/>
            <person name="Rohlin L."/>
            <person name="McDonald E."/>
            <person name="Mouttaki H."/>
            <person name="Sieber J.R."/>
            <person name="Poweleit N."/>
            <person name="Zhou H."/>
            <person name="Lapidus A.L."/>
            <person name="Daligault H.E."/>
            <person name="Land M."/>
            <person name="Gilna P."/>
            <person name="Ivanova N."/>
            <person name="Kyrpides N."/>
            <person name="Culley D.E."/>
            <person name="McInerney M.J."/>
        </authorList>
    </citation>
    <scope>NUCLEOTIDE SEQUENCE [LARGE SCALE GENOMIC DNA]</scope>
    <source>
        <strain>ATCC 27890 / DSM 864 / NBRC 100397 / JF-1</strain>
    </source>
</reference>
<feature type="chain" id="PRO_0000246982" description="7-cyano-7-deazaguanine synthase">
    <location>
        <begin position="1"/>
        <end position="220"/>
    </location>
</feature>
<feature type="binding site" evidence="1">
    <location>
        <begin position="7"/>
        <end position="17"/>
    </location>
    <ligand>
        <name>ATP</name>
        <dbReference type="ChEBI" id="CHEBI:30616"/>
    </ligand>
</feature>
<feature type="binding site" evidence="1">
    <location>
        <position position="187"/>
    </location>
    <ligand>
        <name>Zn(2+)</name>
        <dbReference type="ChEBI" id="CHEBI:29105"/>
    </ligand>
</feature>
<feature type="binding site" evidence="1">
    <location>
        <position position="195"/>
    </location>
    <ligand>
        <name>Zn(2+)</name>
        <dbReference type="ChEBI" id="CHEBI:29105"/>
    </ligand>
</feature>
<feature type="binding site" evidence="1">
    <location>
        <position position="198"/>
    </location>
    <ligand>
        <name>Zn(2+)</name>
        <dbReference type="ChEBI" id="CHEBI:29105"/>
    </ligand>
</feature>
<feature type="binding site" evidence="1">
    <location>
        <position position="201"/>
    </location>
    <ligand>
        <name>Zn(2+)</name>
        <dbReference type="ChEBI" id="CHEBI:29105"/>
    </ligand>
</feature>